<dbReference type="EMBL" id="AF151809">
    <property type="protein sequence ID" value="AAD34046.1"/>
    <property type="molecule type" value="mRNA"/>
</dbReference>
<dbReference type="EMBL" id="AY189688">
    <property type="protein sequence ID" value="AAO85221.1"/>
    <property type="molecule type" value="mRNA"/>
</dbReference>
<dbReference type="EMBL" id="AK001087">
    <property type="protein sequence ID" value="BAA91498.1"/>
    <property type="molecule type" value="mRNA"/>
</dbReference>
<dbReference type="EMBL" id="CR456483">
    <property type="protein sequence ID" value="CAG30369.1"/>
    <property type="molecule type" value="mRNA"/>
</dbReference>
<dbReference type="EMBL" id="AK222657">
    <property type="protein sequence ID" value="BAD96377.1"/>
    <property type="molecule type" value="mRNA"/>
</dbReference>
<dbReference type="EMBL" id="AL035398">
    <property type="status" value="NOT_ANNOTATED_CDS"/>
    <property type="molecule type" value="Genomic_DNA"/>
</dbReference>
<dbReference type="EMBL" id="CH471138">
    <property type="protein sequence ID" value="EAW73326.1"/>
    <property type="molecule type" value="Genomic_DNA"/>
</dbReference>
<dbReference type="EMBL" id="BC007830">
    <property type="protein sequence ID" value="AAH07830.1"/>
    <property type="molecule type" value="mRNA"/>
</dbReference>
<dbReference type="EMBL" id="BC011681">
    <property type="protein sequence ID" value="AAH11681.1"/>
    <property type="molecule type" value="mRNA"/>
</dbReference>
<dbReference type="EMBL" id="BC015200">
    <property type="protein sequence ID" value="AAH15200.1"/>
    <property type="molecule type" value="mRNA"/>
</dbReference>
<dbReference type="CCDS" id="CCDS14055.1"/>
<dbReference type="RefSeq" id="NP_056195.3">
    <property type="nucleotide sequence ID" value="NM_015380.4"/>
</dbReference>
<dbReference type="PDB" id="6YOO">
    <property type="method" value="X-ray"/>
    <property type="resolution" value="1.06 A"/>
    <property type="chains" value="B=24-35"/>
</dbReference>
<dbReference type="PDB" id="6YOP">
    <property type="method" value="X-ray"/>
    <property type="resolution" value="1.10 A"/>
    <property type="chains" value="A=24-39"/>
</dbReference>
<dbReference type="PDBsum" id="6YOO"/>
<dbReference type="PDBsum" id="6YOP"/>
<dbReference type="SMR" id="Q9Y512"/>
<dbReference type="BioGRID" id="117342">
    <property type="interactions" value="230"/>
</dbReference>
<dbReference type="ComplexPortal" id="CPX-6133">
    <property type="entry name" value="SAM mitochondrial sorting and assembly machinery complex"/>
</dbReference>
<dbReference type="CORUM" id="Q9Y512"/>
<dbReference type="FunCoup" id="Q9Y512">
    <property type="interactions" value="2386"/>
</dbReference>
<dbReference type="IntAct" id="Q9Y512">
    <property type="interactions" value="81"/>
</dbReference>
<dbReference type="MINT" id="Q9Y512"/>
<dbReference type="STRING" id="9606.ENSP00000345445"/>
<dbReference type="TCDB" id="1.B.33.3.4">
    <property type="family name" value="the outer membrane protein insertion porin (bam complex) (ompip) family"/>
</dbReference>
<dbReference type="GlyGen" id="Q9Y512">
    <property type="glycosylation" value="5 sites, 1 O-linked glycan (5 sites)"/>
</dbReference>
<dbReference type="iPTMnet" id="Q9Y512"/>
<dbReference type="PhosphoSitePlus" id="Q9Y512"/>
<dbReference type="SwissPalm" id="Q9Y512"/>
<dbReference type="BioMuta" id="SAMM50"/>
<dbReference type="DMDM" id="118572715"/>
<dbReference type="jPOST" id="Q9Y512"/>
<dbReference type="MassIVE" id="Q9Y512"/>
<dbReference type="PaxDb" id="9606-ENSP00000345445"/>
<dbReference type="PeptideAtlas" id="Q9Y512"/>
<dbReference type="ProteomicsDB" id="86271"/>
<dbReference type="Pumba" id="Q9Y512"/>
<dbReference type="Antibodypedia" id="27584">
    <property type="antibodies" value="176 antibodies from 27 providers"/>
</dbReference>
<dbReference type="DNASU" id="25813"/>
<dbReference type="Ensembl" id="ENST00000350028.5">
    <property type="protein sequence ID" value="ENSP00000345445.4"/>
    <property type="gene ID" value="ENSG00000100347.15"/>
</dbReference>
<dbReference type="GeneID" id="25813"/>
<dbReference type="KEGG" id="hsa:25813"/>
<dbReference type="MANE-Select" id="ENST00000350028.5">
    <property type="protein sequence ID" value="ENSP00000345445.4"/>
    <property type="RefSeq nucleotide sequence ID" value="NM_015380.5"/>
    <property type="RefSeq protein sequence ID" value="NP_056195.3"/>
</dbReference>
<dbReference type="UCSC" id="uc003bej.4">
    <property type="organism name" value="human"/>
</dbReference>
<dbReference type="AGR" id="HGNC:24276"/>
<dbReference type="CTD" id="25813"/>
<dbReference type="DisGeNET" id="25813"/>
<dbReference type="GeneCards" id="SAMM50"/>
<dbReference type="HGNC" id="HGNC:24276">
    <property type="gene designation" value="SAMM50"/>
</dbReference>
<dbReference type="HPA" id="ENSG00000100347">
    <property type="expression patterns" value="Tissue enhanced (skeletal)"/>
</dbReference>
<dbReference type="MIM" id="612058">
    <property type="type" value="gene"/>
</dbReference>
<dbReference type="neXtProt" id="NX_Q9Y512"/>
<dbReference type="OpenTargets" id="ENSG00000100347"/>
<dbReference type="PharmGKB" id="PA142670954"/>
<dbReference type="VEuPathDB" id="HostDB:ENSG00000100347"/>
<dbReference type="eggNOG" id="KOG2602">
    <property type="taxonomic scope" value="Eukaryota"/>
</dbReference>
<dbReference type="GeneTree" id="ENSGT00390000011355"/>
<dbReference type="HOGENOM" id="CLU_014798_3_0_1"/>
<dbReference type="InParanoid" id="Q9Y512"/>
<dbReference type="OMA" id="KHPVARF"/>
<dbReference type="OrthoDB" id="1724197at2759"/>
<dbReference type="PAN-GO" id="Q9Y512">
    <property type="GO annotations" value="4 GO annotations based on evolutionary models"/>
</dbReference>
<dbReference type="PhylomeDB" id="Q9Y512"/>
<dbReference type="TreeFam" id="TF106126"/>
<dbReference type="PathwayCommons" id="Q9Y512"/>
<dbReference type="Reactome" id="R-HSA-1268020">
    <property type="pathway name" value="Mitochondrial protein import"/>
</dbReference>
<dbReference type="Reactome" id="R-HSA-8949613">
    <property type="pathway name" value="Cristae formation"/>
</dbReference>
<dbReference type="Reactome" id="R-HSA-9013404">
    <property type="pathway name" value="RAC2 GTPase cycle"/>
</dbReference>
<dbReference type="SignaLink" id="Q9Y512"/>
<dbReference type="SIGNOR" id="Q9Y512"/>
<dbReference type="BioGRID-ORCS" id="25813">
    <property type="hits" value="539 hits in 1159 CRISPR screens"/>
</dbReference>
<dbReference type="CD-CODE" id="FB4E32DD">
    <property type="entry name" value="Presynaptic clusters and postsynaptic densities"/>
</dbReference>
<dbReference type="ChiTaRS" id="SAMM50">
    <property type="organism name" value="human"/>
</dbReference>
<dbReference type="GeneWiki" id="SAMM50"/>
<dbReference type="GenomeRNAi" id="25813"/>
<dbReference type="Pharos" id="Q9Y512">
    <property type="development level" value="Tbio"/>
</dbReference>
<dbReference type="PRO" id="PR:Q9Y512"/>
<dbReference type="Proteomes" id="UP000005640">
    <property type="component" value="Chromosome 22"/>
</dbReference>
<dbReference type="RNAct" id="Q9Y512">
    <property type="molecule type" value="protein"/>
</dbReference>
<dbReference type="Bgee" id="ENSG00000100347">
    <property type="expression patterns" value="Expressed in endothelial cell and 204 other cell types or tissues"/>
</dbReference>
<dbReference type="GO" id="GO:0070062">
    <property type="term" value="C:extracellular exosome"/>
    <property type="evidence" value="ECO:0007005"/>
    <property type="project" value="UniProtKB"/>
</dbReference>
<dbReference type="GO" id="GO:0016020">
    <property type="term" value="C:membrane"/>
    <property type="evidence" value="ECO:0000314"/>
    <property type="project" value="BHF-UCL"/>
</dbReference>
<dbReference type="GO" id="GO:0140275">
    <property type="term" value="C:MIB complex"/>
    <property type="evidence" value="ECO:0007005"/>
    <property type="project" value="UniProtKB"/>
</dbReference>
<dbReference type="GO" id="GO:0005741">
    <property type="term" value="C:mitochondrial outer membrane"/>
    <property type="evidence" value="ECO:0000314"/>
    <property type="project" value="BHF-UCL"/>
</dbReference>
<dbReference type="GO" id="GO:0005739">
    <property type="term" value="C:mitochondrion"/>
    <property type="evidence" value="ECO:0000314"/>
    <property type="project" value="UniProtKB"/>
</dbReference>
<dbReference type="GO" id="GO:0001401">
    <property type="term" value="C:SAM complex"/>
    <property type="evidence" value="ECO:0000315"/>
    <property type="project" value="BHF-UCL"/>
</dbReference>
<dbReference type="GO" id="GO:0042407">
    <property type="term" value="P:cristae formation"/>
    <property type="evidence" value="ECO:0000315"/>
    <property type="project" value="UniProtKB"/>
</dbReference>
<dbReference type="GO" id="GO:0007007">
    <property type="term" value="P:inner mitochondrial membrane organization"/>
    <property type="evidence" value="ECO:0000305"/>
    <property type="project" value="UniProtKB"/>
</dbReference>
<dbReference type="GO" id="GO:0033108">
    <property type="term" value="P:mitochondrial respiratory chain complex assembly"/>
    <property type="evidence" value="ECO:0000318"/>
    <property type="project" value="GO_Central"/>
</dbReference>
<dbReference type="GO" id="GO:0030150">
    <property type="term" value="P:protein import into mitochondrial matrix"/>
    <property type="evidence" value="ECO:0000314"/>
    <property type="project" value="BHF-UCL"/>
</dbReference>
<dbReference type="GO" id="GO:0045040">
    <property type="term" value="P:protein insertion into mitochondrial outer membrane"/>
    <property type="evidence" value="ECO:0000318"/>
    <property type="project" value="GO_Central"/>
</dbReference>
<dbReference type="FunFam" id="2.40.160.50:FF:000002">
    <property type="entry name" value="sorting and assembly machinery component 50 homolog"/>
    <property type="match status" value="1"/>
</dbReference>
<dbReference type="FunFam" id="3.10.20.310:FF:000010">
    <property type="entry name" value="sorting and assembly machinery component 50 homolog"/>
    <property type="match status" value="1"/>
</dbReference>
<dbReference type="Gene3D" id="3.10.20.310">
    <property type="entry name" value="membrane protein fhac"/>
    <property type="match status" value="1"/>
</dbReference>
<dbReference type="Gene3D" id="2.40.160.50">
    <property type="entry name" value="membrane protein fhac: a member of the omp85/tpsb transporter family"/>
    <property type="match status" value="1"/>
</dbReference>
<dbReference type="InterPro" id="IPR000184">
    <property type="entry name" value="Bac_surfAg_D15"/>
</dbReference>
<dbReference type="InterPro" id="IPR039910">
    <property type="entry name" value="D15-like"/>
</dbReference>
<dbReference type="InterPro" id="IPR034746">
    <property type="entry name" value="POTRA"/>
</dbReference>
<dbReference type="PANTHER" id="PTHR12815:SF18">
    <property type="entry name" value="SORTING AND ASSEMBLY MACHINERY COMPONENT 50 HOMOLOG"/>
    <property type="match status" value="1"/>
</dbReference>
<dbReference type="PANTHER" id="PTHR12815">
    <property type="entry name" value="SORTING AND ASSEMBLY MACHINERY SAMM50 PROTEIN FAMILY MEMBER"/>
    <property type="match status" value="1"/>
</dbReference>
<dbReference type="Pfam" id="PF01103">
    <property type="entry name" value="Omp85"/>
    <property type="match status" value="1"/>
</dbReference>
<dbReference type="PROSITE" id="PS51779">
    <property type="entry name" value="POTRA"/>
    <property type="match status" value="1"/>
</dbReference>
<reference key="1">
    <citation type="journal article" date="2000" name="Genome Res.">
        <title>Identification of novel human genes evolutionarily conserved in Caenorhabditis elegans by comparative proteomics.</title>
        <authorList>
            <person name="Lai C.-H."/>
            <person name="Chou C.-Y."/>
            <person name="Ch'ang L.-Y."/>
            <person name="Liu C.-S."/>
            <person name="Lin W.-C."/>
        </authorList>
    </citation>
    <scope>NUCLEOTIDE SEQUENCE [LARGE SCALE MRNA]</scope>
</reference>
<reference key="2">
    <citation type="submission" date="2002-12" db="EMBL/GenBank/DDBJ databases">
        <title>Identification of human transforming gene 3.</title>
        <authorList>
            <person name="Kim J.W."/>
        </authorList>
    </citation>
    <scope>NUCLEOTIDE SEQUENCE [LARGE SCALE MRNA]</scope>
</reference>
<reference key="3">
    <citation type="journal article" date="2004" name="Nat. Genet.">
        <title>Complete sequencing and characterization of 21,243 full-length human cDNAs.</title>
        <authorList>
            <person name="Ota T."/>
            <person name="Suzuki Y."/>
            <person name="Nishikawa T."/>
            <person name="Otsuki T."/>
            <person name="Sugiyama T."/>
            <person name="Irie R."/>
            <person name="Wakamatsu A."/>
            <person name="Hayashi K."/>
            <person name="Sato H."/>
            <person name="Nagai K."/>
            <person name="Kimura K."/>
            <person name="Makita H."/>
            <person name="Sekine M."/>
            <person name="Obayashi M."/>
            <person name="Nishi T."/>
            <person name="Shibahara T."/>
            <person name="Tanaka T."/>
            <person name="Ishii S."/>
            <person name="Yamamoto J."/>
            <person name="Saito K."/>
            <person name="Kawai Y."/>
            <person name="Isono Y."/>
            <person name="Nakamura Y."/>
            <person name="Nagahari K."/>
            <person name="Murakami K."/>
            <person name="Yasuda T."/>
            <person name="Iwayanagi T."/>
            <person name="Wagatsuma M."/>
            <person name="Shiratori A."/>
            <person name="Sudo H."/>
            <person name="Hosoiri T."/>
            <person name="Kaku Y."/>
            <person name="Kodaira H."/>
            <person name="Kondo H."/>
            <person name="Sugawara M."/>
            <person name="Takahashi M."/>
            <person name="Kanda K."/>
            <person name="Yokoi T."/>
            <person name="Furuya T."/>
            <person name="Kikkawa E."/>
            <person name="Omura Y."/>
            <person name="Abe K."/>
            <person name="Kamihara K."/>
            <person name="Katsuta N."/>
            <person name="Sato K."/>
            <person name="Tanikawa M."/>
            <person name="Yamazaki M."/>
            <person name="Ninomiya K."/>
            <person name="Ishibashi T."/>
            <person name="Yamashita H."/>
            <person name="Murakawa K."/>
            <person name="Fujimori K."/>
            <person name="Tanai H."/>
            <person name="Kimata M."/>
            <person name="Watanabe M."/>
            <person name="Hiraoka S."/>
            <person name="Chiba Y."/>
            <person name="Ishida S."/>
            <person name="Ono Y."/>
            <person name="Takiguchi S."/>
            <person name="Watanabe S."/>
            <person name="Yosida M."/>
            <person name="Hotuta T."/>
            <person name="Kusano J."/>
            <person name="Kanehori K."/>
            <person name="Takahashi-Fujii A."/>
            <person name="Hara H."/>
            <person name="Tanase T.-O."/>
            <person name="Nomura Y."/>
            <person name="Togiya S."/>
            <person name="Komai F."/>
            <person name="Hara R."/>
            <person name="Takeuchi K."/>
            <person name="Arita M."/>
            <person name="Imose N."/>
            <person name="Musashino K."/>
            <person name="Yuuki H."/>
            <person name="Oshima A."/>
            <person name="Sasaki N."/>
            <person name="Aotsuka S."/>
            <person name="Yoshikawa Y."/>
            <person name="Matsunawa H."/>
            <person name="Ichihara T."/>
            <person name="Shiohata N."/>
            <person name="Sano S."/>
            <person name="Moriya S."/>
            <person name="Momiyama H."/>
            <person name="Satoh N."/>
            <person name="Takami S."/>
            <person name="Terashima Y."/>
            <person name="Suzuki O."/>
            <person name="Nakagawa S."/>
            <person name="Senoh A."/>
            <person name="Mizoguchi H."/>
            <person name="Goto Y."/>
            <person name="Shimizu F."/>
            <person name="Wakebe H."/>
            <person name="Hishigaki H."/>
            <person name="Watanabe T."/>
            <person name="Sugiyama A."/>
            <person name="Takemoto M."/>
            <person name="Kawakami B."/>
            <person name="Yamazaki M."/>
            <person name="Watanabe K."/>
            <person name="Kumagai A."/>
            <person name="Itakura S."/>
            <person name="Fukuzumi Y."/>
            <person name="Fujimori Y."/>
            <person name="Komiyama M."/>
            <person name="Tashiro H."/>
            <person name="Tanigami A."/>
            <person name="Fujiwara T."/>
            <person name="Ono T."/>
            <person name="Yamada K."/>
            <person name="Fujii Y."/>
            <person name="Ozaki K."/>
            <person name="Hirao M."/>
            <person name="Ohmori Y."/>
            <person name="Kawabata A."/>
            <person name="Hikiji T."/>
            <person name="Kobatake N."/>
            <person name="Inagaki H."/>
            <person name="Ikema Y."/>
            <person name="Okamoto S."/>
            <person name="Okitani R."/>
            <person name="Kawakami T."/>
            <person name="Noguchi S."/>
            <person name="Itoh T."/>
            <person name="Shigeta K."/>
            <person name="Senba T."/>
            <person name="Matsumura K."/>
            <person name="Nakajima Y."/>
            <person name="Mizuno T."/>
            <person name="Morinaga M."/>
            <person name="Sasaki M."/>
            <person name="Togashi T."/>
            <person name="Oyama M."/>
            <person name="Hata H."/>
            <person name="Watanabe M."/>
            <person name="Komatsu T."/>
            <person name="Mizushima-Sugano J."/>
            <person name="Satoh T."/>
            <person name="Shirai Y."/>
            <person name="Takahashi Y."/>
            <person name="Nakagawa K."/>
            <person name="Okumura K."/>
            <person name="Nagase T."/>
            <person name="Nomura N."/>
            <person name="Kikuchi H."/>
            <person name="Masuho Y."/>
            <person name="Yamashita R."/>
            <person name="Nakai K."/>
            <person name="Yada T."/>
            <person name="Nakamura Y."/>
            <person name="Ohara O."/>
            <person name="Isogai T."/>
            <person name="Sugano S."/>
        </authorList>
    </citation>
    <scope>NUCLEOTIDE SEQUENCE [LARGE SCALE MRNA]</scope>
    <scope>VARIANTS GLY-110 AND VAL-345</scope>
    <source>
        <tissue>Embryo</tissue>
    </source>
</reference>
<reference key="4">
    <citation type="journal article" date="2004" name="Genome Biol.">
        <title>A genome annotation-driven approach to cloning the human ORFeome.</title>
        <authorList>
            <person name="Collins J.E."/>
            <person name="Wright C.L."/>
            <person name="Edwards C.A."/>
            <person name="Davis M.P."/>
            <person name="Grinham J.A."/>
            <person name="Cole C.G."/>
            <person name="Goward M.E."/>
            <person name="Aguado B."/>
            <person name="Mallya M."/>
            <person name="Mokrab Y."/>
            <person name="Huckle E.J."/>
            <person name="Beare D.M."/>
            <person name="Dunham I."/>
        </authorList>
    </citation>
    <scope>NUCLEOTIDE SEQUENCE [LARGE SCALE MRNA]</scope>
</reference>
<reference key="5">
    <citation type="submission" date="2005-04" db="EMBL/GenBank/DDBJ databases">
        <authorList>
            <person name="Suzuki Y."/>
            <person name="Sugano S."/>
            <person name="Totoki Y."/>
            <person name="Toyoda A."/>
            <person name="Takeda T."/>
            <person name="Sakaki Y."/>
            <person name="Tanaka A."/>
            <person name="Yokoyama S."/>
        </authorList>
    </citation>
    <scope>NUCLEOTIDE SEQUENCE [LARGE SCALE MRNA]</scope>
    <source>
        <tissue>Cerebellum</tissue>
    </source>
</reference>
<reference key="6">
    <citation type="journal article" date="1999" name="Nature">
        <title>The DNA sequence of human chromosome 22.</title>
        <authorList>
            <person name="Dunham I."/>
            <person name="Hunt A.R."/>
            <person name="Collins J.E."/>
            <person name="Bruskiewich R."/>
            <person name="Beare D.M."/>
            <person name="Clamp M."/>
            <person name="Smink L.J."/>
            <person name="Ainscough R."/>
            <person name="Almeida J.P."/>
            <person name="Babbage A.K."/>
            <person name="Bagguley C."/>
            <person name="Bailey J."/>
            <person name="Barlow K.F."/>
            <person name="Bates K.N."/>
            <person name="Beasley O.P."/>
            <person name="Bird C.P."/>
            <person name="Blakey S.E."/>
            <person name="Bridgeman A.M."/>
            <person name="Buck D."/>
            <person name="Burgess J."/>
            <person name="Burrill W.D."/>
            <person name="Burton J."/>
            <person name="Carder C."/>
            <person name="Carter N.P."/>
            <person name="Chen Y."/>
            <person name="Clark G."/>
            <person name="Clegg S.M."/>
            <person name="Cobley V.E."/>
            <person name="Cole C.G."/>
            <person name="Collier R.E."/>
            <person name="Connor R."/>
            <person name="Conroy D."/>
            <person name="Corby N.R."/>
            <person name="Coville G.J."/>
            <person name="Cox A.V."/>
            <person name="Davis J."/>
            <person name="Dawson E."/>
            <person name="Dhami P.D."/>
            <person name="Dockree C."/>
            <person name="Dodsworth S.J."/>
            <person name="Durbin R.M."/>
            <person name="Ellington A.G."/>
            <person name="Evans K.L."/>
            <person name="Fey J.M."/>
            <person name="Fleming K."/>
            <person name="French L."/>
            <person name="Garner A.A."/>
            <person name="Gilbert J.G.R."/>
            <person name="Goward M.E."/>
            <person name="Grafham D.V."/>
            <person name="Griffiths M.N.D."/>
            <person name="Hall C."/>
            <person name="Hall R.E."/>
            <person name="Hall-Tamlyn G."/>
            <person name="Heathcott R.W."/>
            <person name="Ho S."/>
            <person name="Holmes S."/>
            <person name="Hunt S.E."/>
            <person name="Jones M.C."/>
            <person name="Kershaw J."/>
            <person name="Kimberley A.M."/>
            <person name="King A."/>
            <person name="Laird G.K."/>
            <person name="Langford C.F."/>
            <person name="Leversha M.A."/>
            <person name="Lloyd C."/>
            <person name="Lloyd D.M."/>
            <person name="Martyn I.D."/>
            <person name="Mashreghi-Mohammadi M."/>
            <person name="Matthews L.H."/>
            <person name="Mccann O.T."/>
            <person name="Mcclay J."/>
            <person name="Mclaren S."/>
            <person name="McMurray A.A."/>
            <person name="Milne S.A."/>
            <person name="Mortimore B.J."/>
            <person name="Odell C.N."/>
            <person name="Pavitt R."/>
            <person name="Pearce A.V."/>
            <person name="Pearson D."/>
            <person name="Phillimore B.J.C.T."/>
            <person name="Phillips S.H."/>
            <person name="Plumb R.W."/>
            <person name="Ramsay H."/>
            <person name="Ramsey Y."/>
            <person name="Rogers L."/>
            <person name="Ross M.T."/>
            <person name="Scott C.E."/>
            <person name="Sehra H.K."/>
            <person name="Skuce C.D."/>
            <person name="Smalley S."/>
            <person name="Smith M.L."/>
            <person name="Soderlund C."/>
            <person name="Spragon L."/>
            <person name="Steward C.A."/>
            <person name="Sulston J.E."/>
            <person name="Swann R.M."/>
            <person name="Vaudin M."/>
            <person name="Wall M."/>
            <person name="Wallis J.M."/>
            <person name="Whiteley M.N."/>
            <person name="Willey D.L."/>
            <person name="Williams L."/>
            <person name="Williams S.A."/>
            <person name="Williamson H."/>
            <person name="Wilmer T.E."/>
            <person name="Wilming L."/>
            <person name="Wright C.L."/>
            <person name="Hubbard T."/>
            <person name="Bentley D.R."/>
            <person name="Beck S."/>
            <person name="Rogers J."/>
            <person name="Shimizu N."/>
            <person name="Minoshima S."/>
            <person name="Kawasaki K."/>
            <person name="Sasaki T."/>
            <person name="Asakawa S."/>
            <person name="Kudoh J."/>
            <person name="Shintani A."/>
            <person name="Shibuya K."/>
            <person name="Yoshizaki Y."/>
            <person name="Aoki N."/>
            <person name="Mitsuyama S."/>
            <person name="Roe B.A."/>
            <person name="Chen F."/>
            <person name="Chu L."/>
            <person name="Crabtree J."/>
            <person name="Deschamps S."/>
            <person name="Do A."/>
            <person name="Do T."/>
            <person name="Dorman A."/>
            <person name="Fang F."/>
            <person name="Fu Y."/>
            <person name="Hu P."/>
            <person name="Hua A."/>
            <person name="Kenton S."/>
            <person name="Lai H."/>
            <person name="Lao H.I."/>
            <person name="Lewis J."/>
            <person name="Lewis S."/>
            <person name="Lin S.-P."/>
            <person name="Loh P."/>
            <person name="Malaj E."/>
            <person name="Nguyen T."/>
            <person name="Pan H."/>
            <person name="Phan S."/>
            <person name="Qi S."/>
            <person name="Qian Y."/>
            <person name="Ray L."/>
            <person name="Ren Q."/>
            <person name="Shaull S."/>
            <person name="Sloan D."/>
            <person name="Song L."/>
            <person name="Wang Q."/>
            <person name="Wang Y."/>
            <person name="Wang Z."/>
            <person name="White J."/>
            <person name="Willingham D."/>
            <person name="Wu H."/>
            <person name="Yao Z."/>
            <person name="Zhan M."/>
            <person name="Zhang G."/>
            <person name="Chissoe S."/>
            <person name="Murray J."/>
            <person name="Miller N."/>
            <person name="Minx P."/>
            <person name="Fulton R."/>
            <person name="Johnson D."/>
            <person name="Bemis G."/>
            <person name="Bentley D."/>
            <person name="Bradshaw H."/>
            <person name="Bourne S."/>
            <person name="Cordes M."/>
            <person name="Du Z."/>
            <person name="Fulton L."/>
            <person name="Goela D."/>
            <person name="Graves T."/>
            <person name="Hawkins J."/>
            <person name="Hinds K."/>
            <person name="Kemp K."/>
            <person name="Latreille P."/>
            <person name="Layman D."/>
            <person name="Ozersky P."/>
            <person name="Rohlfing T."/>
            <person name="Scheet P."/>
            <person name="Walker C."/>
            <person name="Wamsley A."/>
            <person name="Wohldmann P."/>
            <person name="Pepin K."/>
            <person name="Nelson J."/>
            <person name="Korf I."/>
            <person name="Bedell J.A."/>
            <person name="Hillier L.W."/>
            <person name="Mardis E."/>
            <person name="Waterston R."/>
            <person name="Wilson R."/>
            <person name="Emanuel B.S."/>
            <person name="Shaikh T."/>
            <person name="Kurahashi H."/>
            <person name="Saitta S."/>
            <person name="Budarf M.L."/>
            <person name="McDermid H.E."/>
            <person name="Johnson A."/>
            <person name="Wong A.C.C."/>
            <person name="Morrow B.E."/>
            <person name="Edelmann L."/>
            <person name="Kim U.J."/>
            <person name="Shizuya H."/>
            <person name="Simon M.I."/>
            <person name="Dumanski J.P."/>
            <person name="Peyrard M."/>
            <person name="Kedra D."/>
            <person name="Seroussi E."/>
            <person name="Fransson I."/>
            <person name="Tapia I."/>
            <person name="Bruder C.E."/>
            <person name="O'Brien K.P."/>
            <person name="Wilkinson P."/>
            <person name="Bodenteich A."/>
            <person name="Hartman K."/>
            <person name="Hu X."/>
            <person name="Khan A.S."/>
            <person name="Lane L."/>
            <person name="Tilahun Y."/>
            <person name="Wright H."/>
        </authorList>
    </citation>
    <scope>NUCLEOTIDE SEQUENCE [LARGE SCALE GENOMIC DNA]</scope>
</reference>
<reference key="7">
    <citation type="submission" date="2005-07" db="EMBL/GenBank/DDBJ databases">
        <authorList>
            <person name="Mural R.J."/>
            <person name="Istrail S."/>
            <person name="Sutton G.G."/>
            <person name="Florea L."/>
            <person name="Halpern A.L."/>
            <person name="Mobarry C.M."/>
            <person name="Lippert R."/>
            <person name="Walenz B."/>
            <person name="Shatkay H."/>
            <person name="Dew I."/>
            <person name="Miller J.R."/>
            <person name="Flanigan M.J."/>
            <person name="Edwards N.J."/>
            <person name="Bolanos R."/>
            <person name="Fasulo D."/>
            <person name="Halldorsson B.V."/>
            <person name="Hannenhalli S."/>
            <person name="Turner R."/>
            <person name="Yooseph S."/>
            <person name="Lu F."/>
            <person name="Nusskern D.R."/>
            <person name="Shue B.C."/>
            <person name="Zheng X.H."/>
            <person name="Zhong F."/>
            <person name="Delcher A.L."/>
            <person name="Huson D.H."/>
            <person name="Kravitz S.A."/>
            <person name="Mouchard L."/>
            <person name="Reinert K."/>
            <person name="Remington K.A."/>
            <person name="Clark A.G."/>
            <person name="Waterman M.S."/>
            <person name="Eichler E.E."/>
            <person name="Adams M.D."/>
            <person name="Hunkapiller M.W."/>
            <person name="Myers E.W."/>
            <person name="Venter J.C."/>
        </authorList>
    </citation>
    <scope>NUCLEOTIDE SEQUENCE [LARGE SCALE GENOMIC DNA]</scope>
</reference>
<reference key="8">
    <citation type="journal article" date="2004" name="Genome Res.">
        <title>The status, quality, and expansion of the NIH full-length cDNA project: the Mammalian Gene Collection (MGC).</title>
        <authorList>
            <consortium name="The MGC Project Team"/>
        </authorList>
    </citation>
    <scope>NUCLEOTIDE SEQUENCE [LARGE SCALE MRNA]</scope>
    <scope>VARIANT VAL-345</scope>
    <source>
        <tissue>Lymph</tissue>
        <tissue>Muscle</tissue>
        <tissue>Skin</tissue>
    </source>
</reference>
<reference key="9">
    <citation type="journal article" date="2005" name="J. Biol. Chem.">
        <title>Dissection of the mitochondrial import and assembly pathway for human Tom40.</title>
        <authorList>
            <person name="Humphries A.D."/>
            <person name="Streimann I.C."/>
            <person name="Stojanovski D."/>
            <person name="Johnston A.J."/>
            <person name="Yano M."/>
            <person name="Hoogenraad N.J."/>
            <person name="Ryan M.T."/>
        </authorList>
    </citation>
    <scope>FUNCTION</scope>
    <scope>SUBCELLULAR LOCATION</scope>
</reference>
<reference key="10">
    <citation type="journal article" date="2011" name="BMC Syst. Biol.">
        <title>Initial characterization of the human central proteome.</title>
        <authorList>
            <person name="Burkard T.R."/>
            <person name="Planyavsky M."/>
            <person name="Kaupe I."/>
            <person name="Breitwieser F.P."/>
            <person name="Buerckstuemmer T."/>
            <person name="Bennett K.L."/>
            <person name="Superti-Furga G."/>
            <person name="Colinge J."/>
        </authorList>
    </citation>
    <scope>IDENTIFICATION BY MASS SPECTROMETRY [LARGE SCALE ANALYSIS]</scope>
</reference>
<reference key="11">
    <citation type="journal article" date="2011" name="J. Biol. Chem.">
        <title>ChChd3, an inner mitochondrial membrane protein, is essential for maintaining crista integrity and mitochondrial function.</title>
        <authorList>
            <person name="Darshi M."/>
            <person name="Mendiola V.L."/>
            <person name="Mackey M.R."/>
            <person name="Murphy A.N."/>
            <person name="Koller A."/>
            <person name="Perkins G.A."/>
            <person name="Ellisman M.H."/>
            <person name="Taylor S.S."/>
        </authorList>
    </citation>
    <scope>INTERACTION WITH CHCHD3</scope>
</reference>
<reference key="12">
    <citation type="journal article" date="2012" name="Mol. Biol. Cell">
        <title>MINOS1 is a conserved component of mitofilin complexes and required for mitochondrial function and cristae organization.</title>
        <authorList>
            <person name="Alkhaja A.K."/>
            <person name="Jans D.C."/>
            <person name="Nikolov M."/>
            <person name="Vukotic M."/>
            <person name="Lytovchenko O."/>
            <person name="Ludewig F."/>
            <person name="Schliebs W."/>
            <person name="Riedel D."/>
            <person name="Urlaub H."/>
            <person name="Jakobs S."/>
            <person name="Deckers M."/>
        </authorList>
    </citation>
    <scope>INTERACTION WITH THE MINOS/MITOS COMPLEX</scope>
</reference>
<reference key="13">
    <citation type="journal article" date="2012" name="Mol. Cell. Biol.">
        <title>Sam50 functions in mitochondrial intermembrane space bridging and biogenesis of respiratory complexes.</title>
        <authorList>
            <person name="Ott C."/>
            <person name="Ross K."/>
            <person name="Straub S."/>
            <person name="Thiede B."/>
            <person name="Gotz M."/>
            <person name="Goosmann C."/>
            <person name="Krischke M."/>
            <person name="Mueller M.J."/>
            <person name="Krohne G."/>
            <person name="Rudel T."/>
            <person name="Kozjak-Pavlovic V."/>
        </authorList>
    </citation>
    <scope>IDENTIFICATION IN THE MIB COMPLEX</scope>
    <scope>FUNCTION</scope>
</reference>
<reference key="14">
    <citation type="journal article" date="2014" name="J. Proteomics">
        <title>An enzyme assisted RP-RPLC approach for in-depth analysis of human liver phosphoproteome.</title>
        <authorList>
            <person name="Bian Y."/>
            <person name="Song C."/>
            <person name="Cheng K."/>
            <person name="Dong M."/>
            <person name="Wang F."/>
            <person name="Huang J."/>
            <person name="Sun D."/>
            <person name="Wang L."/>
            <person name="Ye M."/>
            <person name="Zou H."/>
        </authorList>
    </citation>
    <scope>IDENTIFICATION BY MASS SPECTROMETRY [LARGE SCALE ANALYSIS]</scope>
    <source>
        <tissue>Liver</tissue>
    </source>
</reference>
<reference key="15">
    <citation type="journal article" date="2014" name="Mol. Cell. Proteomics">
        <title>Immunoaffinity enrichment and mass spectrometry analysis of protein methylation.</title>
        <authorList>
            <person name="Guo A."/>
            <person name="Gu H."/>
            <person name="Zhou J."/>
            <person name="Mulhern D."/>
            <person name="Wang Y."/>
            <person name="Lee K.A."/>
            <person name="Yang V."/>
            <person name="Aguiar M."/>
            <person name="Kornhauser J."/>
            <person name="Jia X."/>
            <person name="Ren J."/>
            <person name="Beausoleil S.A."/>
            <person name="Silva J.C."/>
            <person name="Vemulapalli V."/>
            <person name="Bedford M.T."/>
            <person name="Comb M.J."/>
        </authorList>
    </citation>
    <scope>METHYLATION [LARGE SCALE ANALYSIS] AT LYS-255</scope>
    <scope>IDENTIFICATION BY MASS SPECTROMETRY [LARGE SCALE ANALYSIS]</scope>
    <source>
        <tissue>Colon carcinoma</tissue>
    </source>
</reference>
<reference key="16">
    <citation type="journal article" date="2015" name="Elife">
        <title>QIL1 is a novel mitochondrial protein required for MICOS complex stability and cristae morphology.</title>
        <authorList>
            <person name="Guarani V."/>
            <person name="McNeill E.M."/>
            <person name="Paulo J.A."/>
            <person name="Huttlin E.L."/>
            <person name="Froehlich F."/>
            <person name="Gygi S.P."/>
            <person name="Van Vactor D."/>
            <person name="Harper J.W."/>
        </authorList>
    </citation>
    <scope>INTERACTION WITH THE MICOS COMPLEX</scope>
    <scope>INTERACTION WITH IMMT</scope>
</reference>
<reference key="17">
    <citation type="journal article" date="2015" name="PLoS ONE">
        <title>Detailed analysis of the human mitochondrial contact site complex indicate a hierarchy of subunits.</title>
        <authorList>
            <person name="Ott C."/>
            <person name="Dorsch E."/>
            <person name="Fraunholz M."/>
            <person name="Straub S."/>
            <person name="Kozjak-Pavlovic V."/>
        </authorList>
    </citation>
    <scope>INTERACTION WITH THE MICOS COMPLEX</scope>
    <scope>FUNCTION</scope>
    <scope>SUBCELLULAR LOCATION</scope>
</reference>
<reference key="18">
    <citation type="journal article" date="2015" name="Proteomics">
        <title>N-terminome analysis of the human mitochondrial proteome.</title>
        <authorList>
            <person name="Vaca Jacome A.S."/>
            <person name="Rabilloud T."/>
            <person name="Schaeffer-Reiss C."/>
            <person name="Rompais M."/>
            <person name="Ayoub D."/>
            <person name="Lane L."/>
            <person name="Bairoch A."/>
            <person name="Van Dorsselaer A."/>
            <person name="Carapito C."/>
        </authorList>
    </citation>
    <scope>IDENTIFICATION BY MASS SPECTROMETRY [LARGE SCALE ANALYSIS]</scope>
</reference>
<reference key="19">
    <citation type="journal article" date="2017" name="MSphere">
        <title>Toxoplasma gondii MAF1b Binds the Host Cell MIB Complex To Mediate Mitochondrial Association.</title>
        <authorList>
            <person name="Kelly F.D."/>
            <person name="Wei B.M."/>
            <person name="Cygan A.M."/>
            <person name="Parker M.L."/>
            <person name="Boulanger M.J."/>
            <person name="Boothroyd J.C."/>
        </authorList>
    </citation>
    <scope>INTERACTION WITH T.GONDII MAF1B1 (MICROBIAL INFECTION)</scope>
</reference>
<reference key="20">
    <citation type="journal article" date="2019" name="PLoS ONE">
        <title>Armadillo repeat-containing protein 1 is a dual localization protein associated with mitochondrial intermembrane space bridging complex.</title>
        <authorList>
            <person name="Wagner F."/>
            <person name="Kunz T.C."/>
            <person name="Chowdhury S.R."/>
            <person name="Thiede B."/>
            <person name="Fraunholz M."/>
            <person name="Eger D."/>
            <person name="Kozjak-Pavlovic V."/>
        </authorList>
    </citation>
    <scope>INTERACTION WITH ARMC1</scope>
</reference>
<reference key="21">
    <citation type="journal article" date="2022" name="Science">
        <title>Mitochondria shed their outer membrane in response to infection-induced stress.</title>
        <authorList>
            <person name="Li X."/>
            <person name="Straub J."/>
            <person name="Medeiros T.C."/>
            <person name="Mehra C."/>
            <person name="den Brave F."/>
            <person name="Peker E."/>
            <person name="Atanassov I."/>
            <person name="Stillger K."/>
            <person name="Michaelis J.B."/>
            <person name="Burbridge E."/>
            <person name="Adrain C."/>
            <person name="Muench C."/>
            <person name="Riemer J."/>
            <person name="Becker T."/>
            <person name="Pernas L.F."/>
        </authorList>
    </citation>
    <scope>INTERACTION WITH T.GONDII MAF1B1 (MICROBIAL INFECTION)</scope>
</reference>
<proteinExistence type="evidence at protein level"/>
<gene>
    <name type="primary">SAMM50</name>
    <name type="synonym">SAM50</name>
    <name type="ORF">CGI-51</name>
    <name type="ORF">TRG3</name>
</gene>
<organism>
    <name type="scientific">Homo sapiens</name>
    <name type="common">Human</name>
    <dbReference type="NCBI Taxonomy" id="9606"/>
    <lineage>
        <taxon>Eukaryota</taxon>
        <taxon>Metazoa</taxon>
        <taxon>Chordata</taxon>
        <taxon>Craniata</taxon>
        <taxon>Vertebrata</taxon>
        <taxon>Euteleostomi</taxon>
        <taxon>Mammalia</taxon>
        <taxon>Eutheria</taxon>
        <taxon>Euarchontoglires</taxon>
        <taxon>Primates</taxon>
        <taxon>Haplorrhini</taxon>
        <taxon>Catarrhini</taxon>
        <taxon>Hominidae</taxon>
        <taxon>Homo</taxon>
    </lineage>
</organism>
<comment type="function">
    <text evidence="7 10 11">Plays a crucial role in the maintenance of the structure of mitochondrial cristae and the proper assembly of the mitochondrial respiratory chain complexes (PubMed:22252321, PubMed:25781180). Required for the assembly of TOMM40 into the TOM complex (PubMed:15644312).</text>
</comment>
<comment type="subunit">
    <text evidence="8 9 10 11 12 14">Associates with the mitochondrial contact site and cristae organizing system (MICOS) complex, composed of at least MICOS10/MIC10, CHCHD3/MIC19, CHCHD6/MIC25, APOOL/MIC27, IMMT/MIC60, APOO/MIC23/MIC26 and QIL1/MIC13 (PubMed:25781180, PubMed:25997101). This complex was also known under the names MINOS or MitOS complex. The MICOS complex associates with mitochondrial outer membrane proteins SAMM50, MTX1 and MTX2 (together described as components of the mitochondrial outer membrane sorting assembly machinery (SAM) complex) and DNAJC11, mitochondrial inner membrane protein TMEM11 and with HSPA9 (PubMed:25781180, PubMed:25997101). The MICOS and SAM complexes together with DNAJC11 are part of a large protein complex spanning both membranes termed the mitochondrial intermembrane space bridging (MIB) complex (PubMed:25997101). Interacts with CHCHD3/MIC19 (PubMed:21081504). Interacts with ARMC1 (PubMed:31644573).</text>
</comment>
<comment type="subunit">
    <text evidence="13 15">(Microbial infection) Interacts with parasite T.gondii RH strain MAF1b1; the interaction is probably indirect and results in the disruption of the MIB complex and the formation of SPOTs (structures positive for outer mitochondrial membrane (OMM)), a cellular response to OMM stress, which leads to the constitutive shedding of OMM vesicles.</text>
</comment>
<comment type="interaction">
    <interactant intactId="EBI-748409">
        <id>Q9Y512</id>
    </interactant>
    <interactant intactId="EBI-743375">
        <id>Q9NX63</id>
        <label>CHCHD3</label>
    </interactant>
    <organismsDiffer>false</organismsDiffer>
    <experiments>7</experiments>
</comment>
<comment type="interaction">
    <interactant intactId="EBI-748409">
        <id>Q9Y512</id>
    </interactant>
    <interactant intactId="EBI-2557895">
        <id>Q9BRQ6</id>
        <label>CHCHD6</label>
    </interactant>
    <organismsDiffer>false</organismsDiffer>
    <experiments>3</experiments>
</comment>
<comment type="interaction">
    <interactant intactId="EBI-748409">
        <id>Q9Y512</id>
    </interactant>
    <interactant intactId="EBI-724571">
        <id>O00429</id>
        <label>DNM1L</label>
    </interactant>
    <organismsDiffer>false</organismsDiffer>
    <experiments>3</experiments>
</comment>
<comment type="interaction">
    <interactant intactId="EBI-748409">
        <id>Q9Y512</id>
    </interactant>
    <interactant intactId="EBI-3324756">
        <id>O95140</id>
        <label>MFN2</label>
    </interactant>
    <organismsDiffer>false</organismsDiffer>
    <experiments>2</experiments>
</comment>
<comment type="subcellular location">
    <subcellularLocation>
        <location evidence="7">Mitochondrion outer membrane</location>
        <topology>Multi-pass membrane protein</topology>
    </subcellularLocation>
    <subcellularLocation>
        <location evidence="2">Cytoplasm</location>
    </subcellularLocation>
    <subcellularLocation>
        <location evidence="11">Mitochondrion</location>
    </subcellularLocation>
</comment>
<comment type="domain">
    <text evidence="1">Its C-terminal part seems to contain many membrane-spanning sided beta-sheets, that have the potential to adopt a transmembrane beta-barrel type structure.</text>
</comment>
<comment type="similarity">
    <text evidence="16">Belongs to the SAM50/omp85 family.</text>
</comment>
<accession>Q9Y512</accession>
<accession>Q53HC4</accession>
<accession>Q56VW7</accession>
<accession>Q969Y9</accession>
<accession>Q96I46</accession>
<accession>Q9NW85</accession>
<accession>Q9UQM9</accession>
<name>SAM50_HUMAN</name>
<feature type="chain" id="PRO_0000215939" description="Sorting and assembly machinery component 50 homolog">
    <location>
        <begin position="1"/>
        <end position="469"/>
    </location>
</feature>
<feature type="domain" description="POTRA" evidence="3">
    <location>
        <begin position="45"/>
        <end position="125"/>
    </location>
</feature>
<feature type="region of interest" description="Disordered" evidence="4">
    <location>
        <begin position="1"/>
        <end position="20"/>
    </location>
</feature>
<feature type="modified residue" description="N6-methyllysine" evidence="17">
    <location>
        <position position="255"/>
    </location>
</feature>
<feature type="sequence variant" id="VAR_057338" description="In dbSNP:rs3761472." evidence="5">
    <original>D</original>
    <variation>G</variation>
    <location>
        <position position="110"/>
    </location>
</feature>
<feature type="sequence variant" id="VAR_013768" description="In dbSNP:rs8418." evidence="5 6">
    <original>I</original>
    <variation>V</variation>
    <location>
        <position position="345"/>
    </location>
</feature>
<feature type="sequence conflict" description="In Ref. 5; BAD96377." evidence="16" ref="5">
    <original>E</original>
    <variation>G</variation>
    <location>
        <position position="10"/>
    </location>
</feature>
<feature type="sequence conflict" description="In Ref. 1; AAD34046." evidence="16" ref="1">
    <original>WAGGL</original>
    <variation>LGRRW</variation>
    <location>
        <begin position="368"/>
        <end position="372"/>
    </location>
</feature>
<feature type="sequence conflict" description="In Ref. 8; AAH07830." evidence="16" ref="8">
    <location>
        <position position="371"/>
    </location>
</feature>
<protein>
    <recommendedName>
        <fullName>Sorting and assembly machinery component 50 homolog</fullName>
    </recommendedName>
    <alternativeName>
        <fullName>Transformation-related gene 3 protein</fullName>
        <shortName>TRG-3</shortName>
    </alternativeName>
</protein>
<evidence type="ECO:0000250" key="1"/>
<evidence type="ECO:0000250" key="2">
    <source>
        <dbReference type="UniProtKB" id="Q6AXV4"/>
    </source>
</evidence>
<evidence type="ECO:0000255" key="3">
    <source>
        <dbReference type="PROSITE-ProRule" id="PRU01115"/>
    </source>
</evidence>
<evidence type="ECO:0000256" key="4">
    <source>
        <dbReference type="SAM" id="MobiDB-lite"/>
    </source>
</evidence>
<evidence type="ECO:0000269" key="5">
    <source>
    </source>
</evidence>
<evidence type="ECO:0000269" key="6">
    <source>
    </source>
</evidence>
<evidence type="ECO:0000269" key="7">
    <source>
    </source>
</evidence>
<evidence type="ECO:0000269" key="8">
    <source>
    </source>
</evidence>
<evidence type="ECO:0000269" key="9">
    <source>
    </source>
</evidence>
<evidence type="ECO:0000269" key="10">
    <source>
    </source>
</evidence>
<evidence type="ECO:0000269" key="11">
    <source>
    </source>
</evidence>
<evidence type="ECO:0000269" key="12">
    <source>
    </source>
</evidence>
<evidence type="ECO:0000269" key="13">
    <source>
    </source>
</evidence>
<evidence type="ECO:0000269" key="14">
    <source>
    </source>
</evidence>
<evidence type="ECO:0000269" key="15">
    <source>
    </source>
</evidence>
<evidence type="ECO:0000305" key="16"/>
<evidence type="ECO:0007744" key="17">
    <source>
    </source>
</evidence>
<sequence>MGTVHARSLEPLPSSGPDFGGLGEEAEFVEVEPEAKQEILENKDVVVQHVHFDGLGRTKDDIIICEIGDVFKAKNLIEVMRKSHEAREKLLRLGIFRQVDVLIDTCQGDDALPNGLDVTFEVTELRRLTGSYNTMVGNNEGSMVLGLKLPNLLGRAEKVTFQFSYGTKETSYGLSFFKPRPGNFERNFSVNLYKVTGQFPWSSLRETDRGMSAEYSFPIWKTSHTVKWEGVWRELGCLSRTASFAVRKESGHSLKSSLSHAMVIDSRNSSILPRRGALLKVNQELAGYTGGDVSFIKEDFELQLNKQLIFDSVFSASFWGGMLVPIGDKPSSIADRFYLGGPTSIRGFSMHSIGPQSEGDYLGGEAYWAGGLHLYTPLPFRPGQGGFGELFRTHFFLNAGNLCNLNYGEGPKAHIRKLAECIRWSYGAGIVLRLGNIARLELNYCVPMGVQTGDRICDGVQFGAGIRFL</sequence>
<keyword id="KW-0002">3D-structure</keyword>
<keyword id="KW-0963">Cytoplasm</keyword>
<keyword id="KW-0472">Membrane</keyword>
<keyword id="KW-0488">Methylation</keyword>
<keyword id="KW-0496">Mitochondrion</keyword>
<keyword id="KW-1000">Mitochondrion outer membrane</keyword>
<keyword id="KW-1267">Proteomics identification</keyword>
<keyword id="KW-1185">Reference proteome</keyword>
<keyword id="KW-0812">Transmembrane</keyword>
<keyword id="KW-1134">Transmembrane beta strand</keyword>